<gene>
    <name evidence="1" type="primary">groEL</name>
    <name evidence="1" type="synonym">groL</name>
    <name type="ordered locus">EC55989_4698</name>
</gene>
<name>CH60_ECO55</name>
<sequence>MAAKDVKFGNDARVKMLRGVNVLADAVKVTLGPKGRNVVLDKSFGAPTITKDGVSVAREIELEDKFENMGAQMVKEVASKANDAAGDGTTTATVLAQAIITEGLKAVAAGMNPMDLKRGIDKAVTAAVEELKALSVPCSDSKAIAQVGTISANSDETVGKLIAEAMDKVGKEGVITVEDGTGLQDELDVVEGMQFDRGYLSPYFINKPETGAVELESPFILLADKKISNIREMLPVLEAVAKAGKPLLIIAEDVEGEALATLVVNTMRGIVKVAAVKAPGFGDRRKAMLQDIATLTGGTVISEEIGMELEKATLEDLGQAKRVVINKDTTTIIDGVGEEAAIQGRVAQIRQQIEEATSDYDREKLQERVAKLAGGVAVIKVGAATEVEMKEKKARVEDALHATRAAVEEGVVAGGGVALIRVASKLADLRGQNEDQNVGIKVALRAMEAPLRQIVLNCGEEPSVVANTVKGGDGNYGYNAATEEYGNMIDMGILDPTKVTRSALQYAASVAGLMITTECMVTDLPKNDAADLGAAGGMGGMGGMGGMM</sequence>
<reference key="1">
    <citation type="journal article" date="2009" name="PLoS Genet.">
        <title>Organised genome dynamics in the Escherichia coli species results in highly diverse adaptive paths.</title>
        <authorList>
            <person name="Touchon M."/>
            <person name="Hoede C."/>
            <person name="Tenaillon O."/>
            <person name="Barbe V."/>
            <person name="Baeriswyl S."/>
            <person name="Bidet P."/>
            <person name="Bingen E."/>
            <person name="Bonacorsi S."/>
            <person name="Bouchier C."/>
            <person name="Bouvet O."/>
            <person name="Calteau A."/>
            <person name="Chiapello H."/>
            <person name="Clermont O."/>
            <person name="Cruveiller S."/>
            <person name="Danchin A."/>
            <person name="Diard M."/>
            <person name="Dossat C."/>
            <person name="Karoui M.E."/>
            <person name="Frapy E."/>
            <person name="Garry L."/>
            <person name="Ghigo J.M."/>
            <person name="Gilles A.M."/>
            <person name="Johnson J."/>
            <person name="Le Bouguenec C."/>
            <person name="Lescat M."/>
            <person name="Mangenot S."/>
            <person name="Martinez-Jehanne V."/>
            <person name="Matic I."/>
            <person name="Nassif X."/>
            <person name="Oztas S."/>
            <person name="Petit M.A."/>
            <person name="Pichon C."/>
            <person name="Rouy Z."/>
            <person name="Ruf C.S."/>
            <person name="Schneider D."/>
            <person name="Tourret J."/>
            <person name="Vacherie B."/>
            <person name="Vallenet D."/>
            <person name="Medigue C."/>
            <person name="Rocha E.P.C."/>
            <person name="Denamur E."/>
        </authorList>
    </citation>
    <scope>NUCLEOTIDE SEQUENCE [LARGE SCALE GENOMIC DNA]</scope>
    <source>
        <strain>55989 / EAEC</strain>
    </source>
</reference>
<protein>
    <recommendedName>
        <fullName evidence="1">Chaperonin GroEL</fullName>
        <ecNumber evidence="1">5.6.1.7</ecNumber>
    </recommendedName>
    <alternativeName>
        <fullName evidence="1">60 kDa chaperonin</fullName>
    </alternativeName>
    <alternativeName>
        <fullName evidence="1">Chaperonin-60</fullName>
        <shortName evidence="1">Cpn60</shortName>
    </alternativeName>
</protein>
<accession>B7LC02</accession>
<feature type="chain" id="PRO_1000147032" description="Chaperonin GroEL">
    <location>
        <begin position="1"/>
        <end position="548"/>
    </location>
</feature>
<feature type="binding site" evidence="1">
    <location>
        <begin position="30"/>
        <end position="33"/>
    </location>
    <ligand>
        <name>ATP</name>
        <dbReference type="ChEBI" id="CHEBI:30616"/>
    </ligand>
</feature>
<feature type="binding site" evidence="1">
    <location>
        <position position="51"/>
    </location>
    <ligand>
        <name>ATP</name>
        <dbReference type="ChEBI" id="CHEBI:30616"/>
    </ligand>
</feature>
<feature type="binding site" evidence="1">
    <location>
        <begin position="87"/>
        <end position="91"/>
    </location>
    <ligand>
        <name>ATP</name>
        <dbReference type="ChEBI" id="CHEBI:30616"/>
    </ligand>
</feature>
<feature type="binding site" evidence="1">
    <location>
        <position position="415"/>
    </location>
    <ligand>
        <name>ATP</name>
        <dbReference type="ChEBI" id="CHEBI:30616"/>
    </ligand>
</feature>
<feature type="binding site" evidence="1">
    <location>
        <begin position="479"/>
        <end position="481"/>
    </location>
    <ligand>
        <name>ATP</name>
        <dbReference type="ChEBI" id="CHEBI:30616"/>
    </ligand>
</feature>
<feature type="binding site" evidence="1">
    <location>
        <position position="495"/>
    </location>
    <ligand>
        <name>ATP</name>
        <dbReference type="ChEBI" id="CHEBI:30616"/>
    </ligand>
</feature>
<dbReference type="EC" id="5.6.1.7" evidence="1"/>
<dbReference type="EMBL" id="CU928145">
    <property type="protein sequence ID" value="CAV01595.1"/>
    <property type="molecule type" value="Genomic_DNA"/>
</dbReference>
<dbReference type="RefSeq" id="WP_000729117.1">
    <property type="nucleotide sequence ID" value="NZ_CP028304.1"/>
</dbReference>
<dbReference type="SMR" id="B7LC02"/>
<dbReference type="GeneID" id="93777681"/>
<dbReference type="KEGG" id="eck:EC55989_4698"/>
<dbReference type="HOGENOM" id="CLU_016503_3_0_6"/>
<dbReference type="Proteomes" id="UP000000746">
    <property type="component" value="Chromosome"/>
</dbReference>
<dbReference type="GO" id="GO:0005737">
    <property type="term" value="C:cytoplasm"/>
    <property type="evidence" value="ECO:0007669"/>
    <property type="project" value="UniProtKB-SubCell"/>
</dbReference>
<dbReference type="GO" id="GO:0005524">
    <property type="term" value="F:ATP binding"/>
    <property type="evidence" value="ECO:0007669"/>
    <property type="project" value="UniProtKB-UniRule"/>
</dbReference>
<dbReference type="GO" id="GO:0140662">
    <property type="term" value="F:ATP-dependent protein folding chaperone"/>
    <property type="evidence" value="ECO:0007669"/>
    <property type="project" value="InterPro"/>
</dbReference>
<dbReference type="GO" id="GO:0016853">
    <property type="term" value="F:isomerase activity"/>
    <property type="evidence" value="ECO:0007669"/>
    <property type="project" value="UniProtKB-KW"/>
</dbReference>
<dbReference type="GO" id="GO:0051082">
    <property type="term" value="F:unfolded protein binding"/>
    <property type="evidence" value="ECO:0007669"/>
    <property type="project" value="UniProtKB-UniRule"/>
</dbReference>
<dbReference type="GO" id="GO:0042026">
    <property type="term" value="P:protein refolding"/>
    <property type="evidence" value="ECO:0007669"/>
    <property type="project" value="UniProtKB-UniRule"/>
</dbReference>
<dbReference type="CDD" id="cd03344">
    <property type="entry name" value="GroEL"/>
    <property type="match status" value="1"/>
</dbReference>
<dbReference type="FunFam" id="1.10.560.10:FF:000001">
    <property type="entry name" value="60 kDa chaperonin"/>
    <property type="match status" value="1"/>
</dbReference>
<dbReference type="FunFam" id="3.50.7.10:FF:000001">
    <property type="entry name" value="60 kDa chaperonin"/>
    <property type="match status" value="1"/>
</dbReference>
<dbReference type="Gene3D" id="3.50.7.10">
    <property type="entry name" value="GroEL"/>
    <property type="match status" value="1"/>
</dbReference>
<dbReference type="Gene3D" id="1.10.560.10">
    <property type="entry name" value="GroEL-like equatorial domain"/>
    <property type="match status" value="1"/>
</dbReference>
<dbReference type="Gene3D" id="3.30.260.10">
    <property type="entry name" value="TCP-1-like chaperonin intermediate domain"/>
    <property type="match status" value="1"/>
</dbReference>
<dbReference type="HAMAP" id="MF_00600">
    <property type="entry name" value="CH60"/>
    <property type="match status" value="1"/>
</dbReference>
<dbReference type="InterPro" id="IPR018370">
    <property type="entry name" value="Chaperonin_Cpn60_CS"/>
</dbReference>
<dbReference type="InterPro" id="IPR001844">
    <property type="entry name" value="Cpn60/GroEL"/>
</dbReference>
<dbReference type="InterPro" id="IPR002423">
    <property type="entry name" value="Cpn60/GroEL/TCP-1"/>
</dbReference>
<dbReference type="InterPro" id="IPR027409">
    <property type="entry name" value="GroEL-like_apical_dom_sf"/>
</dbReference>
<dbReference type="InterPro" id="IPR027413">
    <property type="entry name" value="GROEL-like_equatorial_sf"/>
</dbReference>
<dbReference type="InterPro" id="IPR027410">
    <property type="entry name" value="TCP-1-like_intermed_sf"/>
</dbReference>
<dbReference type="NCBIfam" id="TIGR02348">
    <property type="entry name" value="GroEL"/>
    <property type="match status" value="1"/>
</dbReference>
<dbReference type="NCBIfam" id="NF000592">
    <property type="entry name" value="PRK00013.1"/>
    <property type="match status" value="1"/>
</dbReference>
<dbReference type="NCBIfam" id="NF009487">
    <property type="entry name" value="PRK12849.1"/>
    <property type="match status" value="1"/>
</dbReference>
<dbReference type="NCBIfam" id="NF009488">
    <property type="entry name" value="PRK12850.1"/>
    <property type="match status" value="1"/>
</dbReference>
<dbReference type="NCBIfam" id="NF009489">
    <property type="entry name" value="PRK12851.1"/>
    <property type="match status" value="1"/>
</dbReference>
<dbReference type="PANTHER" id="PTHR45633">
    <property type="entry name" value="60 KDA HEAT SHOCK PROTEIN, MITOCHONDRIAL"/>
    <property type="match status" value="1"/>
</dbReference>
<dbReference type="Pfam" id="PF00118">
    <property type="entry name" value="Cpn60_TCP1"/>
    <property type="match status" value="1"/>
</dbReference>
<dbReference type="PRINTS" id="PR00298">
    <property type="entry name" value="CHAPERONIN60"/>
</dbReference>
<dbReference type="SUPFAM" id="SSF52029">
    <property type="entry name" value="GroEL apical domain-like"/>
    <property type="match status" value="1"/>
</dbReference>
<dbReference type="SUPFAM" id="SSF48592">
    <property type="entry name" value="GroEL equatorial domain-like"/>
    <property type="match status" value="1"/>
</dbReference>
<dbReference type="SUPFAM" id="SSF54849">
    <property type="entry name" value="GroEL-intermediate domain like"/>
    <property type="match status" value="1"/>
</dbReference>
<dbReference type="PROSITE" id="PS00296">
    <property type="entry name" value="CHAPERONINS_CPN60"/>
    <property type="match status" value="1"/>
</dbReference>
<evidence type="ECO:0000255" key="1">
    <source>
        <dbReference type="HAMAP-Rule" id="MF_00600"/>
    </source>
</evidence>
<proteinExistence type="inferred from homology"/>
<organism>
    <name type="scientific">Escherichia coli (strain 55989 / EAEC)</name>
    <dbReference type="NCBI Taxonomy" id="585055"/>
    <lineage>
        <taxon>Bacteria</taxon>
        <taxon>Pseudomonadati</taxon>
        <taxon>Pseudomonadota</taxon>
        <taxon>Gammaproteobacteria</taxon>
        <taxon>Enterobacterales</taxon>
        <taxon>Enterobacteriaceae</taxon>
        <taxon>Escherichia</taxon>
    </lineage>
</organism>
<comment type="function">
    <text evidence="1">Together with its co-chaperonin GroES, plays an essential role in assisting protein folding. The GroEL-GroES system forms a nano-cage that allows encapsulation of the non-native substrate proteins and provides a physical environment optimized to promote and accelerate protein folding.</text>
</comment>
<comment type="catalytic activity">
    <reaction evidence="1">
        <text>ATP + H2O + a folded polypeptide = ADP + phosphate + an unfolded polypeptide.</text>
        <dbReference type="EC" id="5.6.1.7"/>
    </reaction>
</comment>
<comment type="subunit">
    <text evidence="1">Forms a cylinder of 14 subunits composed of two heptameric rings stacked back-to-back. Interacts with the co-chaperonin GroES.</text>
</comment>
<comment type="subcellular location">
    <subcellularLocation>
        <location evidence="1">Cytoplasm</location>
    </subcellularLocation>
</comment>
<comment type="similarity">
    <text evidence="1">Belongs to the chaperonin (HSP60) family.</text>
</comment>
<keyword id="KW-0067">ATP-binding</keyword>
<keyword id="KW-0143">Chaperone</keyword>
<keyword id="KW-0963">Cytoplasm</keyword>
<keyword id="KW-0413">Isomerase</keyword>
<keyword id="KW-0547">Nucleotide-binding</keyword>
<keyword id="KW-1185">Reference proteome</keyword>